<protein>
    <recommendedName>
        <fullName>Cyanophycinase</fullName>
        <ecNumber>3.4.15.6</ecNumber>
    </recommendedName>
</protein>
<organism>
    <name type="scientific">Geminocystis herdmanii (strain PCC 6308)</name>
    <name type="common">Synechocystis sp. (strain PCC 6308)</name>
    <dbReference type="NCBI Taxonomy" id="113355"/>
    <lineage>
        <taxon>Bacteria</taxon>
        <taxon>Bacillati</taxon>
        <taxon>Cyanobacteriota</taxon>
        <taxon>Cyanophyceae</taxon>
        <taxon>Oscillatoriophycideae</taxon>
        <taxon>Chroococcales</taxon>
        <taxon>Geminocystaceae</taxon>
        <taxon>Geminocystis</taxon>
    </lineage>
</organism>
<gene>
    <name type="primary">cphB</name>
</gene>
<sequence>MKQYLRSSVLVIGGAEDKVHGKEILQRFWHCAGGTDAIIAIIPSASREPTIIGDRYVSIFSEMGAKDLKVLDVRDRIQGEDKDYQEYVEKCTAIFMTGGDQLRLCGLLADTPLMERIRQRVKLGEVTLGGTSAGAAVMGHHMIAGGSSGESPNRALVDMAMGLGIIPEVIVDQHFHNRNRMARLLSALSNHPERLGIGIDEDTCAVFQKDEYIEVIGKGTVTIVDGQAMSYTNHGKVAAEDPLALHNLRLHILGHGDRYNRKTHQPMAGIVE</sequence>
<evidence type="ECO:0000250" key="1"/>
<evidence type="ECO:0000305" key="2"/>
<comment type="function">
    <text>Exopeptidase that catalyzes the hydrolytic cleavage of multi-L-arginyl-poly-L-aspartic acid (cyanophycin; a water-insoluble reserve polymer) into aspartate-arginine dipeptides.</text>
</comment>
<comment type="catalytic activity">
    <reaction>
        <text>[L-4-(L-arginin-2-N-yl)aspartate](n) + H2O = [L-4-(L-arginin-2-N-yl)aspartate](n-1) + L-4-(L-arginin-2-N-yl)aspartate</text>
        <dbReference type="Rhea" id="RHEA:12845"/>
        <dbReference type="Rhea" id="RHEA-COMP:13728"/>
        <dbReference type="Rhea" id="RHEA-COMP:13734"/>
        <dbReference type="ChEBI" id="CHEBI:15377"/>
        <dbReference type="ChEBI" id="CHEBI:137986"/>
        <dbReference type="ChEBI" id="CHEBI:137991"/>
        <dbReference type="EC" id="3.4.15.6"/>
    </reaction>
</comment>
<comment type="similarity">
    <text evidence="2">Belongs to the peptidase S51 family.</text>
</comment>
<proteinExistence type="inferred from homology"/>
<accession>P56946</accession>
<reference key="1">
    <citation type="journal article" date="2000" name="Arch. Microbiol.">
        <title>Molecular characterization of the cyanophycin synthetase from Synechocystis sp. strain PCC6308.</title>
        <authorList>
            <person name="Aboulmagd E."/>
            <person name="Oppermann-Sanio F.B."/>
            <person name="Steinbuechel A."/>
        </authorList>
    </citation>
    <scope>NUCLEOTIDE SEQUENCE [GENOMIC DNA]</scope>
</reference>
<keyword id="KW-0378">Hydrolase</keyword>
<keyword id="KW-0645">Protease</keyword>
<keyword id="KW-0720">Serine protease</keyword>
<dbReference type="EC" id="3.4.15.6"/>
<dbReference type="EMBL" id="AF220099">
    <property type="protein sequence ID" value="AAF43646.1"/>
    <property type="molecule type" value="Genomic_DNA"/>
</dbReference>
<dbReference type="SMR" id="P56946"/>
<dbReference type="GO" id="GO:0008241">
    <property type="term" value="F:peptidyl-dipeptidase activity"/>
    <property type="evidence" value="ECO:0007669"/>
    <property type="project" value="UniProtKB-EC"/>
</dbReference>
<dbReference type="GO" id="GO:0008236">
    <property type="term" value="F:serine-type peptidase activity"/>
    <property type="evidence" value="ECO:0007669"/>
    <property type="project" value="UniProtKB-KW"/>
</dbReference>
<dbReference type="GO" id="GO:0006508">
    <property type="term" value="P:proteolysis"/>
    <property type="evidence" value="ECO:0007669"/>
    <property type="project" value="UniProtKB-KW"/>
</dbReference>
<dbReference type="CDD" id="cd03145">
    <property type="entry name" value="GAT1_cyanophycinase"/>
    <property type="match status" value="1"/>
</dbReference>
<dbReference type="Gene3D" id="3.40.50.880">
    <property type="match status" value="1"/>
</dbReference>
<dbReference type="InterPro" id="IPR029062">
    <property type="entry name" value="Class_I_gatase-like"/>
</dbReference>
<dbReference type="InterPro" id="IPR005320">
    <property type="entry name" value="Peptidase_S51"/>
</dbReference>
<dbReference type="InterPro" id="IPR011811">
    <property type="entry name" value="Peptidase_S51_cyanophycinase"/>
</dbReference>
<dbReference type="NCBIfam" id="TIGR02069">
    <property type="entry name" value="cyanophycinase"/>
    <property type="match status" value="1"/>
</dbReference>
<dbReference type="PANTHER" id="PTHR36175">
    <property type="entry name" value="CYANOPHYCINASE"/>
    <property type="match status" value="1"/>
</dbReference>
<dbReference type="PANTHER" id="PTHR36175:SF1">
    <property type="entry name" value="CYANOPHYCINASE"/>
    <property type="match status" value="1"/>
</dbReference>
<dbReference type="Pfam" id="PF03575">
    <property type="entry name" value="Peptidase_S51"/>
    <property type="match status" value="1"/>
</dbReference>
<dbReference type="PIRSF" id="PIRSF032067">
    <property type="entry name" value="Cyanophycinase"/>
    <property type="match status" value="1"/>
</dbReference>
<dbReference type="SUPFAM" id="SSF52317">
    <property type="entry name" value="Class I glutamine amidotransferase-like"/>
    <property type="match status" value="1"/>
</dbReference>
<name>CPHB_GEMHP</name>
<feature type="chain" id="PRO_0000209975" description="Cyanophycinase">
    <location>
        <begin position="1"/>
        <end position="272"/>
    </location>
</feature>
<feature type="active site" description="Charge relay system" evidence="1">
    <location>
        <position position="132"/>
    </location>
</feature>
<feature type="active site" description="Charge relay system" evidence="1">
    <location>
        <position position="150"/>
    </location>
</feature>
<feature type="active site" description="Charge relay system" evidence="1">
    <location>
        <position position="174"/>
    </location>
</feature>